<feature type="chain" id="PRO_0000360084" description="Tryptophan 2,3-dioxygenase">
    <location>
        <begin position="1"/>
        <end position="279"/>
    </location>
</feature>
<feature type="binding site" evidence="1">
    <location>
        <begin position="48"/>
        <end position="52"/>
    </location>
    <ligand>
        <name>substrate</name>
    </ligand>
</feature>
<feature type="binding site" evidence="1">
    <location>
        <position position="110"/>
    </location>
    <ligand>
        <name>substrate</name>
    </ligand>
</feature>
<feature type="binding site" evidence="1">
    <location>
        <position position="114"/>
    </location>
    <ligand>
        <name>substrate</name>
    </ligand>
</feature>
<feature type="binding site" description="axial binding residue" evidence="1">
    <location>
        <position position="237"/>
    </location>
    <ligand>
        <name>heme</name>
        <dbReference type="ChEBI" id="CHEBI:30413"/>
    </ligand>
    <ligandPart>
        <name>Fe</name>
        <dbReference type="ChEBI" id="CHEBI:18248"/>
    </ligandPart>
</feature>
<feature type="binding site" evidence="1">
    <location>
        <position position="251"/>
    </location>
    <ligand>
        <name>substrate</name>
    </ligand>
</feature>
<dbReference type="EC" id="1.13.11.11" evidence="1"/>
<dbReference type="EMBL" id="AE016879">
    <property type="protein sequence ID" value="AAP26587.1"/>
    <property type="molecule type" value="Genomic_DNA"/>
</dbReference>
<dbReference type="EMBL" id="AE017334">
    <property type="protein sequence ID" value="AAT31867.1"/>
    <property type="molecule type" value="Genomic_DNA"/>
</dbReference>
<dbReference type="EMBL" id="AE017225">
    <property type="protein sequence ID" value="AAT54875.1"/>
    <property type="molecule type" value="Genomic_DNA"/>
</dbReference>
<dbReference type="RefSeq" id="NP_845101.1">
    <property type="nucleotide sequence ID" value="NC_003997.3"/>
</dbReference>
<dbReference type="RefSeq" id="WP_000661969.1">
    <property type="nucleotide sequence ID" value="NZ_WXXJ01000026.1"/>
</dbReference>
<dbReference type="RefSeq" id="YP_028824.1">
    <property type="nucleotide sequence ID" value="NC_005945.1"/>
</dbReference>
<dbReference type="SMR" id="Q81PQ0"/>
<dbReference type="STRING" id="261594.GBAA_2751"/>
<dbReference type="DNASU" id="1088379"/>
<dbReference type="GeneID" id="45022593"/>
<dbReference type="KEGG" id="ban:BA_2751"/>
<dbReference type="KEGG" id="banh:HYU01_13645"/>
<dbReference type="KEGG" id="bar:GBAA_2751"/>
<dbReference type="KEGG" id="bat:BAS2565"/>
<dbReference type="PATRIC" id="fig|198094.11.peg.2735"/>
<dbReference type="eggNOG" id="COG3483">
    <property type="taxonomic scope" value="Bacteria"/>
</dbReference>
<dbReference type="HOGENOM" id="CLU_063240_0_0_9"/>
<dbReference type="OMA" id="WRWRNDH"/>
<dbReference type="OrthoDB" id="9776847at2"/>
<dbReference type="UniPathway" id="UPA00333">
    <property type="reaction ID" value="UER00453"/>
</dbReference>
<dbReference type="Proteomes" id="UP000000427">
    <property type="component" value="Chromosome"/>
</dbReference>
<dbReference type="Proteomes" id="UP000000594">
    <property type="component" value="Chromosome"/>
</dbReference>
<dbReference type="GO" id="GO:0020037">
    <property type="term" value="F:heme binding"/>
    <property type="evidence" value="ECO:0000250"/>
    <property type="project" value="UniProtKB"/>
</dbReference>
<dbReference type="GO" id="GO:0046872">
    <property type="term" value="F:metal ion binding"/>
    <property type="evidence" value="ECO:0007669"/>
    <property type="project" value="UniProtKB-KW"/>
</dbReference>
<dbReference type="GO" id="GO:0004833">
    <property type="term" value="F:tryptophan 2,3-dioxygenase activity"/>
    <property type="evidence" value="ECO:0000250"/>
    <property type="project" value="UniProtKB"/>
</dbReference>
<dbReference type="GO" id="GO:0019442">
    <property type="term" value="P:L-tryptophan catabolic process to acetyl-CoA"/>
    <property type="evidence" value="ECO:0007669"/>
    <property type="project" value="TreeGrafter"/>
</dbReference>
<dbReference type="GO" id="GO:0019441">
    <property type="term" value="P:L-tryptophan catabolic process to kynurenine"/>
    <property type="evidence" value="ECO:0000250"/>
    <property type="project" value="UniProtKB"/>
</dbReference>
<dbReference type="FunFam" id="1.20.58.480:FF:000001">
    <property type="entry name" value="Tryptophan 2,3-dioxygenase"/>
    <property type="match status" value="1"/>
</dbReference>
<dbReference type="Gene3D" id="1.20.58.480">
    <property type="match status" value="1"/>
</dbReference>
<dbReference type="HAMAP" id="MF_01972">
    <property type="entry name" value="T23O"/>
    <property type="match status" value="1"/>
</dbReference>
<dbReference type="InterPro" id="IPR037217">
    <property type="entry name" value="Trp/Indoleamine_2_3_dOase-like"/>
</dbReference>
<dbReference type="InterPro" id="IPR017485">
    <property type="entry name" value="Trp_2-3-dOase_bac"/>
</dbReference>
<dbReference type="InterPro" id="IPR004981">
    <property type="entry name" value="Trp_2_3_dOase"/>
</dbReference>
<dbReference type="NCBIfam" id="TIGR03036">
    <property type="entry name" value="trp_2_3_diox"/>
    <property type="match status" value="1"/>
</dbReference>
<dbReference type="PANTHER" id="PTHR10138">
    <property type="entry name" value="TRYPTOPHAN 2,3-DIOXYGENASE"/>
    <property type="match status" value="1"/>
</dbReference>
<dbReference type="PANTHER" id="PTHR10138:SF0">
    <property type="entry name" value="TRYPTOPHAN 2,3-DIOXYGENASE"/>
    <property type="match status" value="1"/>
</dbReference>
<dbReference type="Pfam" id="PF03301">
    <property type="entry name" value="Trp_dioxygenase"/>
    <property type="match status" value="1"/>
</dbReference>
<dbReference type="SUPFAM" id="SSF140959">
    <property type="entry name" value="Indolic compounds 2,3-dioxygenase-like"/>
    <property type="match status" value="1"/>
</dbReference>
<keyword id="KW-0223">Dioxygenase</keyword>
<keyword id="KW-0349">Heme</keyword>
<keyword id="KW-0408">Iron</keyword>
<keyword id="KW-0479">Metal-binding</keyword>
<keyword id="KW-0560">Oxidoreductase</keyword>
<keyword id="KW-1185">Reference proteome</keyword>
<keyword id="KW-0823">Tryptophan catabolism</keyword>
<sequence>MKENEKVIMEKGIHTDFKENMTYGEYLQLDSLLSSQKRLSDHHDEMLFIVIHQASELWMKLILHELNAAIESIKQDKLQPAFKMLARVSKIQSQIIQSWDILATLTPSEYIEFRDSLGQASGFQSYQYRMIEYALGYKTPHALKIYEKDPELHARLHTALHAPSLYNVAIQALVKEGFPIHKDVLNRDITQPYEEDATVEAAWLEVYADVKKYWNLYQLAEKLIDIEDWLQQWRFRHMKTVERIIGHKMGTGGSSGVSYLKRVLDQRFFPELWNVRTKL</sequence>
<gene>
    <name evidence="1" type="primary">kynA</name>
    <name type="ordered locus">BA_2751</name>
    <name type="ordered locus">GBAA_2751</name>
    <name type="ordered locus">BAS2565</name>
</gene>
<reference key="1">
    <citation type="journal article" date="2003" name="Nature">
        <title>The genome sequence of Bacillus anthracis Ames and comparison to closely related bacteria.</title>
        <authorList>
            <person name="Read T.D."/>
            <person name="Peterson S.N."/>
            <person name="Tourasse N.J."/>
            <person name="Baillie L.W."/>
            <person name="Paulsen I.T."/>
            <person name="Nelson K.E."/>
            <person name="Tettelin H."/>
            <person name="Fouts D.E."/>
            <person name="Eisen J.A."/>
            <person name="Gill S.R."/>
            <person name="Holtzapple E.K."/>
            <person name="Okstad O.A."/>
            <person name="Helgason E."/>
            <person name="Rilstone J."/>
            <person name="Wu M."/>
            <person name="Kolonay J.F."/>
            <person name="Beanan M.J."/>
            <person name="Dodson R.J."/>
            <person name="Brinkac L.M."/>
            <person name="Gwinn M.L."/>
            <person name="DeBoy R.T."/>
            <person name="Madpu R."/>
            <person name="Daugherty S.C."/>
            <person name="Durkin A.S."/>
            <person name="Haft D.H."/>
            <person name="Nelson W.C."/>
            <person name="Peterson J.D."/>
            <person name="Pop M."/>
            <person name="Khouri H.M."/>
            <person name="Radune D."/>
            <person name="Benton J.L."/>
            <person name="Mahamoud Y."/>
            <person name="Jiang L."/>
            <person name="Hance I.R."/>
            <person name="Weidman J.F."/>
            <person name="Berry K.J."/>
            <person name="Plaut R.D."/>
            <person name="Wolf A.M."/>
            <person name="Watkins K.L."/>
            <person name="Nierman W.C."/>
            <person name="Hazen A."/>
            <person name="Cline R.T."/>
            <person name="Redmond C."/>
            <person name="Thwaite J.E."/>
            <person name="White O."/>
            <person name="Salzberg S.L."/>
            <person name="Thomason B."/>
            <person name="Friedlander A.M."/>
            <person name="Koehler T.M."/>
            <person name="Hanna P.C."/>
            <person name="Kolstoe A.-B."/>
            <person name="Fraser C.M."/>
        </authorList>
    </citation>
    <scope>NUCLEOTIDE SEQUENCE [LARGE SCALE GENOMIC DNA]</scope>
    <source>
        <strain>Ames / isolate Porton</strain>
    </source>
</reference>
<reference key="2">
    <citation type="submission" date="2004-01" db="EMBL/GenBank/DDBJ databases">
        <title>Complete genome sequence of Bacillus anthracis Sterne.</title>
        <authorList>
            <person name="Brettin T.S."/>
            <person name="Bruce D."/>
            <person name="Challacombe J.F."/>
            <person name="Gilna P."/>
            <person name="Han C."/>
            <person name="Hill K."/>
            <person name="Hitchcock P."/>
            <person name="Jackson P."/>
            <person name="Keim P."/>
            <person name="Longmire J."/>
            <person name="Lucas S."/>
            <person name="Okinaka R."/>
            <person name="Richardson P."/>
            <person name="Rubin E."/>
            <person name="Tice H."/>
        </authorList>
    </citation>
    <scope>NUCLEOTIDE SEQUENCE [LARGE SCALE GENOMIC DNA]</scope>
    <source>
        <strain>Sterne</strain>
    </source>
</reference>
<reference key="3">
    <citation type="journal article" date="2009" name="J. Bacteriol.">
        <title>The complete genome sequence of Bacillus anthracis Ames 'Ancestor'.</title>
        <authorList>
            <person name="Ravel J."/>
            <person name="Jiang L."/>
            <person name="Stanley S.T."/>
            <person name="Wilson M.R."/>
            <person name="Decker R.S."/>
            <person name="Read T.D."/>
            <person name="Worsham P."/>
            <person name="Keim P.S."/>
            <person name="Salzberg S.L."/>
            <person name="Fraser-Liggett C.M."/>
            <person name="Rasko D.A."/>
        </authorList>
    </citation>
    <scope>NUCLEOTIDE SEQUENCE [LARGE SCALE GENOMIC DNA]</scope>
    <source>
        <strain>Ames ancestor</strain>
    </source>
</reference>
<accession>Q81PQ0</accession>
<accession>Q6HXW4</accession>
<accession>Q6KRY6</accession>
<name>T23O_BACAN</name>
<organism>
    <name type="scientific">Bacillus anthracis</name>
    <dbReference type="NCBI Taxonomy" id="1392"/>
    <lineage>
        <taxon>Bacteria</taxon>
        <taxon>Bacillati</taxon>
        <taxon>Bacillota</taxon>
        <taxon>Bacilli</taxon>
        <taxon>Bacillales</taxon>
        <taxon>Bacillaceae</taxon>
        <taxon>Bacillus</taxon>
        <taxon>Bacillus cereus group</taxon>
    </lineage>
</organism>
<evidence type="ECO:0000255" key="1">
    <source>
        <dbReference type="HAMAP-Rule" id="MF_01972"/>
    </source>
</evidence>
<proteinExistence type="inferred from homology"/>
<protein>
    <recommendedName>
        <fullName evidence="1">Tryptophan 2,3-dioxygenase</fullName>
        <shortName evidence="1">TDO</shortName>
        <ecNumber evidence="1">1.13.11.11</ecNumber>
    </recommendedName>
    <alternativeName>
        <fullName evidence="1">Tryptamin 2,3-dioxygenase</fullName>
    </alternativeName>
    <alternativeName>
        <fullName evidence="1">Tryptophan oxygenase</fullName>
        <shortName evidence="1">TO</shortName>
        <shortName evidence="1">TRPO</shortName>
    </alternativeName>
    <alternativeName>
        <fullName evidence="1">Tryptophan pyrrolase</fullName>
    </alternativeName>
    <alternativeName>
        <fullName evidence="1">Tryptophanase</fullName>
    </alternativeName>
</protein>
<comment type="function">
    <text evidence="1">Heme-dependent dioxygenase that catalyzes the oxidative cleavage of the L-tryptophan (L-Trp) pyrrole ring and converts L-tryptophan to N-formyl-L-kynurenine. Catalyzes the oxidative cleavage of the indole moiety.</text>
</comment>
<comment type="catalytic activity">
    <reaction evidence="1">
        <text>L-tryptophan + O2 = N-formyl-L-kynurenine</text>
        <dbReference type="Rhea" id="RHEA:24536"/>
        <dbReference type="ChEBI" id="CHEBI:15379"/>
        <dbReference type="ChEBI" id="CHEBI:57912"/>
        <dbReference type="ChEBI" id="CHEBI:58629"/>
        <dbReference type="EC" id="1.13.11.11"/>
    </reaction>
</comment>
<comment type="cofactor">
    <cofactor evidence="1">
        <name>heme</name>
        <dbReference type="ChEBI" id="CHEBI:30413"/>
    </cofactor>
    <text evidence="1">Binds 1 heme group per subunit.</text>
</comment>
<comment type="pathway">
    <text evidence="1">Amino-acid degradation; L-tryptophan degradation via kynurenine pathway; L-kynurenine from L-tryptophan: step 1/2.</text>
</comment>
<comment type="subunit">
    <text evidence="1">Homotetramer.</text>
</comment>
<comment type="similarity">
    <text evidence="1">Belongs to the tryptophan 2,3-dioxygenase family.</text>
</comment>